<feature type="chain" id="PRO_0000132730" description="Squamosa promoter-binding-like protein 9">
    <location>
        <begin position="1"/>
        <end position="375"/>
    </location>
</feature>
<feature type="zinc finger region" description="SBP-type" evidence="3">
    <location>
        <begin position="71"/>
        <end position="148"/>
    </location>
</feature>
<feature type="region of interest" description="Disordered" evidence="4">
    <location>
        <begin position="1"/>
        <end position="30"/>
    </location>
</feature>
<feature type="region of interest" description="Disordered" evidence="4">
    <location>
        <begin position="43"/>
        <end position="73"/>
    </location>
</feature>
<feature type="region of interest" description="Disordered" evidence="4">
    <location>
        <begin position="252"/>
        <end position="278"/>
    </location>
</feature>
<feature type="region of interest" description="Disordered" evidence="4">
    <location>
        <begin position="345"/>
        <end position="375"/>
    </location>
</feature>
<feature type="short sequence motif" description="Bipartite nuclear localization signal" evidence="2">
    <location>
        <begin position="131"/>
        <end position="147"/>
    </location>
</feature>
<feature type="compositionally biased region" description="Low complexity" evidence="4">
    <location>
        <begin position="18"/>
        <end position="30"/>
    </location>
</feature>
<feature type="compositionally biased region" description="Low complexity" evidence="4">
    <location>
        <begin position="262"/>
        <end position="275"/>
    </location>
</feature>
<feature type="compositionally biased region" description="Basic and acidic residues" evidence="4">
    <location>
        <begin position="345"/>
        <end position="362"/>
    </location>
</feature>
<feature type="compositionally biased region" description="Polar residues" evidence="4">
    <location>
        <begin position="363"/>
        <end position="375"/>
    </location>
</feature>
<feature type="binding site" evidence="3">
    <location>
        <position position="74"/>
    </location>
    <ligand>
        <name>Zn(2+)</name>
        <dbReference type="ChEBI" id="CHEBI:29105"/>
        <label>1</label>
    </ligand>
</feature>
<feature type="binding site" evidence="3">
    <location>
        <position position="79"/>
    </location>
    <ligand>
        <name>Zn(2+)</name>
        <dbReference type="ChEBI" id="CHEBI:29105"/>
        <label>1</label>
    </ligand>
</feature>
<feature type="binding site" evidence="3">
    <location>
        <position position="96"/>
    </location>
    <ligand>
        <name>Zn(2+)</name>
        <dbReference type="ChEBI" id="CHEBI:29105"/>
        <label>1</label>
    </ligand>
</feature>
<feature type="binding site" evidence="3">
    <location>
        <position position="99"/>
    </location>
    <ligand>
        <name>Zn(2+)</name>
        <dbReference type="ChEBI" id="CHEBI:29105"/>
        <label>1</label>
    </ligand>
</feature>
<feature type="binding site" evidence="3">
    <location>
        <position position="115"/>
    </location>
    <ligand>
        <name>Zn(2+)</name>
        <dbReference type="ChEBI" id="CHEBI:29105"/>
        <label>2</label>
    </ligand>
</feature>
<feature type="binding site" evidence="3">
    <location>
        <position position="118"/>
    </location>
    <ligand>
        <name>Zn(2+)</name>
        <dbReference type="ChEBI" id="CHEBI:29105"/>
        <label>2</label>
    </ligand>
</feature>
<feature type="binding site" evidence="3">
    <location>
        <position position="122"/>
    </location>
    <ligand>
        <name>Zn(2+)</name>
        <dbReference type="ChEBI" id="CHEBI:29105"/>
        <label>2</label>
    </ligand>
</feature>
<feature type="binding site" evidence="3">
    <location>
        <position position="134"/>
    </location>
    <ligand>
        <name>Zn(2+)</name>
        <dbReference type="ChEBI" id="CHEBI:29105"/>
        <label>2</label>
    </ligand>
</feature>
<feature type="splice variant" id="VSP_013985" description="In isoform 2." evidence="8">
    <location>
        <begin position="324"/>
        <end position="331"/>
    </location>
</feature>
<feature type="sequence conflict" description="In Ref. 4; AAK76681." evidence="9" ref="4">
    <original>I</original>
    <variation>N</variation>
    <location>
        <position position="243"/>
    </location>
</feature>
<feature type="sequence conflict" description="In Ref. 4; AAK76681." evidence="9" ref="4">
    <location>
        <position position="262"/>
    </location>
</feature>
<feature type="sequence conflict" description="In Ref. 5; CAG25585." evidence="9" ref="5">
    <original>N</original>
    <variation>NNNN</variation>
    <location>
        <position position="275"/>
    </location>
</feature>
<feature type="sequence conflict" description="In Ref. 1; CAB56591." evidence="9" ref="1">
    <original>N</original>
    <variation>NNNNNNN</variation>
    <location>
        <position position="275"/>
    </location>
</feature>
<organism>
    <name type="scientific">Arabidopsis thaliana</name>
    <name type="common">Mouse-ear cress</name>
    <dbReference type="NCBI Taxonomy" id="3702"/>
    <lineage>
        <taxon>Eukaryota</taxon>
        <taxon>Viridiplantae</taxon>
        <taxon>Streptophyta</taxon>
        <taxon>Embryophyta</taxon>
        <taxon>Tracheophyta</taxon>
        <taxon>Spermatophyta</taxon>
        <taxon>Magnoliopsida</taxon>
        <taxon>eudicotyledons</taxon>
        <taxon>Gunneridae</taxon>
        <taxon>Pentapetalae</taxon>
        <taxon>rosids</taxon>
        <taxon>malvids</taxon>
        <taxon>Brassicales</taxon>
        <taxon>Brassicaceae</taxon>
        <taxon>Camelineae</taxon>
        <taxon>Arabidopsis</taxon>
    </lineage>
</organism>
<reference key="1">
    <citation type="journal article" date="1999" name="Gene">
        <title>Molecular characterization of the Arabidopsis SBP-box genes.</title>
        <authorList>
            <person name="Cardon G.H."/>
            <person name="Hoehmann S."/>
            <person name="Klein J."/>
            <person name="Nettesheim K."/>
            <person name="Saedler H."/>
            <person name="Huijser P."/>
        </authorList>
    </citation>
    <scope>NUCLEOTIDE SEQUENCE [GENOMIC DNA / MRNA] (ISOFORMS 1 AND 2)</scope>
    <scope>DEVELOPMENTAL STAGE</scope>
    <source>
        <strain>cv. Columbia</strain>
        <strain>cv. Landsberg erecta</strain>
        <tissue>Flower</tissue>
    </source>
</reference>
<reference key="2">
    <citation type="journal article" date="1999" name="Nature">
        <title>Sequence and analysis of chromosome 2 of the plant Arabidopsis thaliana.</title>
        <authorList>
            <person name="Lin X."/>
            <person name="Kaul S."/>
            <person name="Rounsley S.D."/>
            <person name="Shea T.P."/>
            <person name="Benito M.-I."/>
            <person name="Town C.D."/>
            <person name="Fujii C.Y."/>
            <person name="Mason T.M."/>
            <person name="Bowman C.L."/>
            <person name="Barnstead M.E."/>
            <person name="Feldblyum T.V."/>
            <person name="Buell C.R."/>
            <person name="Ketchum K.A."/>
            <person name="Lee J.J."/>
            <person name="Ronning C.M."/>
            <person name="Koo H.L."/>
            <person name="Moffat K.S."/>
            <person name="Cronin L.A."/>
            <person name="Shen M."/>
            <person name="Pai G."/>
            <person name="Van Aken S."/>
            <person name="Umayam L."/>
            <person name="Tallon L.J."/>
            <person name="Gill J.E."/>
            <person name="Adams M.D."/>
            <person name="Carrera A.J."/>
            <person name="Creasy T.H."/>
            <person name="Goodman H.M."/>
            <person name="Somerville C.R."/>
            <person name="Copenhaver G.P."/>
            <person name="Preuss D."/>
            <person name="Nierman W.C."/>
            <person name="White O."/>
            <person name="Eisen J.A."/>
            <person name="Salzberg S.L."/>
            <person name="Fraser C.M."/>
            <person name="Venter J.C."/>
        </authorList>
    </citation>
    <scope>NUCLEOTIDE SEQUENCE [LARGE SCALE GENOMIC DNA]</scope>
    <source>
        <strain>cv. Columbia</strain>
    </source>
</reference>
<reference key="3">
    <citation type="journal article" date="2017" name="Plant J.">
        <title>Araport11: a complete reannotation of the Arabidopsis thaliana reference genome.</title>
        <authorList>
            <person name="Cheng C.Y."/>
            <person name="Krishnakumar V."/>
            <person name="Chan A.P."/>
            <person name="Thibaud-Nissen F."/>
            <person name="Schobel S."/>
            <person name="Town C.D."/>
        </authorList>
    </citation>
    <scope>GENOME REANNOTATION</scope>
    <source>
        <strain>cv. Columbia</strain>
    </source>
</reference>
<reference key="4">
    <citation type="journal article" date="2003" name="Science">
        <title>Empirical analysis of transcriptional activity in the Arabidopsis genome.</title>
        <authorList>
            <person name="Yamada K."/>
            <person name="Lim J."/>
            <person name="Dale J.M."/>
            <person name="Chen H."/>
            <person name="Shinn P."/>
            <person name="Palm C.J."/>
            <person name="Southwick A.M."/>
            <person name="Wu H.C."/>
            <person name="Kim C.J."/>
            <person name="Nguyen M."/>
            <person name="Pham P.K."/>
            <person name="Cheuk R.F."/>
            <person name="Karlin-Newmann G."/>
            <person name="Liu S.X."/>
            <person name="Lam B."/>
            <person name="Sakano H."/>
            <person name="Wu T."/>
            <person name="Yu G."/>
            <person name="Miranda M."/>
            <person name="Quach H.L."/>
            <person name="Tripp M."/>
            <person name="Chang C.H."/>
            <person name="Lee J.M."/>
            <person name="Toriumi M.J."/>
            <person name="Chan M.M."/>
            <person name="Tang C.C."/>
            <person name="Onodera C.S."/>
            <person name="Deng J.M."/>
            <person name="Akiyama K."/>
            <person name="Ansari Y."/>
            <person name="Arakawa T."/>
            <person name="Banh J."/>
            <person name="Banno F."/>
            <person name="Bowser L."/>
            <person name="Brooks S.Y."/>
            <person name="Carninci P."/>
            <person name="Chao Q."/>
            <person name="Choy N."/>
            <person name="Enju A."/>
            <person name="Goldsmith A.D."/>
            <person name="Gurjal M."/>
            <person name="Hansen N.F."/>
            <person name="Hayashizaki Y."/>
            <person name="Johnson-Hopson C."/>
            <person name="Hsuan V.W."/>
            <person name="Iida K."/>
            <person name="Karnes M."/>
            <person name="Khan S."/>
            <person name="Koesema E."/>
            <person name="Ishida J."/>
            <person name="Jiang P.X."/>
            <person name="Jones T."/>
            <person name="Kawai J."/>
            <person name="Kamiya A."/>
            <person name="Meyers C."/>
            <person name="Nakajima M."/>
            <person name="Narusaka M."/>
            <person name="Seki M."/>
            <person name="Sakurai T."/>
            <person name="Satou M."/>
            <person name="Tamse R."/>
            <person name="Vaysberg M."/>
            <person name="Wallender E.K."/>
            <person name="Wong C."/>
            <person name="Yamamura Y."/>
            <person name="Yuan S."/>
            <person name="Shinozaki K."/>
            <person name="Davis R.W."/>
            <person name="Theologis A."/>
            <person name="Ecker J.R."/>
        </authorList>
    </citation>
    <scope>NUCLEOTIDE SEQUENCE [LARGE SCALE MRNA] (ISOFORM 1)</scope>
    <source>
        <strain>cv. Columbia</strain>
    </source>
</reference>
<reference key="5">
    <citation type="journal article" date="2004" name="Plant Physiol.">
        <title>Genome-wide ORFeome cloning and analysis of Arabidopsis transcription factor genes.</title>
        <authorList>
            <person name="Gong W."/>
            <person name="Shen Y.-P."/>
            <person name="Ma L.-G."/>
            <person name="Pan Y."/>
            <person name="Du Y.-L."/>
            <person name="Wang D.-H."/>
            <person name="Yang J.-Y."/>
            <person name="Hu L.-D."/>
            <person name="Liu X.-F."/>
            <person name="Dong C.-X."/>
            <person name="Ma L."/>
            <person name="Chen Y.-H."/>
            <person name="Yang X.-Y."/>
            <person name="Gao Y."/>
            <person name="Zhu D."/>
            <person name="Tan X."/>
            <person name="Mu J.-Y."/>
            <person name="Zhang D.-B."/>
            <person name="Liu Y.-L."/>
            <person name="Dinesh-Kumar S.P."/>
            <person name="Li Y."/>
            <person name="Wang X.-P."/>
            <person name="Gu H.-Y."/>
            <person name="Qu L.-J."/>
            <person name="Bai S.-N."/>
            <person name="Lu Y.-T."/>
            <person name="Li J.-Y."/>
            <person name="Zhao J.-D."/>
            <person name="Zuo J."/>
            <person name="Huang H."/>
            <person name="Deng X.-W."/>
            <person name="Zhu Y.-X."/>
        </authorList>
    </citation>
    <scope>NUCLEOTIDE SEQUENCE [LARGE SCALE MRNA] (ISOFORM 1)</scope>
    <source>
        <strain>cv. Columbia</strain>
    </source>
</reference>
<reference key="6">
    <citation type="journal article" date="2002" name="Cell">
        <title>Prediction of plant microRNA targets.</title>
        <authorList>
            <person name="Rhoades M.W."/>
            <person name="Reinhart B.J."/>
            <person name="Lim L.P."/>
            <person name="Burge C.B."/>
            <person name="Bartel B."/>
            <person name="Bartel D.P."/>
        </authorList>
    </citation>
    <scope>INDUCTION</scope>
</reference>
<reference key="7">
    <citation type="journal article" date="2003" name="Development">
        <title>Dissection of floral induction pathways using global expression analysis.</title>
        <authorList>
            <person name="Schmid M."/>
            <person name="Uhlenhaut N.H."/>
            <person name="Godard F."/>
            <person name="Demar M."/>
            <person name="Bressan R."/>
            <person name="Weigel D."/>
            <person name="Lohmann J.U."/>
        </authorList>
    </citation>
    <scope>DEVELOPMENTAL STAGE</scope>
</reference>
<reference key="8">
    <citation type="journal article" date="2005" name="J. Mol. Biol.">
        <title>Functional dissection of the plant-specific SBP-domain: overlap of the DNA-binding and nuclear localization domains.</title>
        <authorList>
            <person name="Birkenbihl R.P."/>
            <person name="Jach G."/>
            <person name="Saedler H."/>
            <person name="Huijser P."/>
        </authorList>
    </citation>
    <scope>SUBCELLULAR LOCATION</scope>
</reference>
<accession>Q700W2</accession>
<accession>O48527</accession>
<accession>Q94AJ2</accession>
<accession>Q9SMX7</accession>
<dbReference type="EMBL" id="AJ011638">
    <property type="protein sequence ID" value="CAB56590.1"/>
    <property type="molecule type" value="mRNA"/>
</dbReference>
<dbReference type="EMBL" id="AJ011639">
    <property type="protein sequence ID" value="CAB56591.1"/>
    <property type="molecule type" value="mRNA"/>
</dbReference>
<dbReference type="EMBL" id="AJ011640">
    <property type="protein sequence ID" value="CAB56592.1"/>
    <property type="molecule type" value="Genomic_DNA"/>
</dbReference>
<dbReference type="EMBL" id="AC002561">
    <property type="protein sequence ID" value="AAB88645.1"/>
    <property type="molecule type" value="Genomic_DNA"/>
</dbReference>
<dbReference type="EMBL" id="CP002685">
    <property type="protein sequence ID" value="AEC10085.1"/>
    <property type="molecule type" value="Genomic_DNA"/>
</dbReference>
<dbReference type="EMBL" id="AY046007">
    <property type="protein sequence ID" value="AAK76681.1"/>
    <property type="molecule type" value="mRNA"/>
</dbReference>
<dbReference type="EMBL" id="AY150378">
    <property type="protein sequence ID" value="AAN12923.1"/>
    <property type="molecule type" value="mRNA"/>
</dbReference>
<dbReference type="EMBL" id="AJ628864">
    <property type="protein sequence ID" value="CAG25585.1"/>
    <property type="molecule type" value="mRNA"/>
</dbReference>
<dbReference type="PIR" id="T00929">
    <property type="entry name" value="T00929"/>
</dbReference>
<dbReference type="PIR" id="T52593">
    <property type="entry name" value="T52593"/>
</dbReference>
<dbReference type="RefSeq" id="NP_181749.1">
    <molecule id="Q700W2-1"/>
    <property type="nucleotide sequence ID" value="NM_129782.3"/>
</dbReference>
<dbReference type="SMR" id="Q700W2"/>
<dbReference type="FunCoup" id="Q700W2">
    <property type="interactions" value="264"/>
</dbReference>
<dbReference type="IntAct" id="Q700W2">
    <property type="interactions" value="2"/>
</dbReference>
<dbReference type="STRING" id="3702.Q700W2"/>
<dbReference type="iPTMnet" id="Q700W2"/>
<dbReference type="PaxDb" id="3702-AT2G42200.1"/>
<dbReference type="ProteomicsDB" id="245197">
    <molecule id="Q700W2-1"/>
</dbReference>
<dbReference type="EnsemblPlants" id="AT2G42200.1">
    <molecule id="Q700W2-1"/>
    <property type="protein sequence ID" value="AT2G42200.1"/>
    <property type="gene ID" value="AT2G42200"/>
</dbReference>
<dbReference type="GeneID" id="818820"/>
<dbReference type="Gramene" id="AT2G42200.1">
    <molecule id="Q700W2-1"/>
    <property type="protein sequence ID" value="AT2G42200.1"/>
    <property type="gene ID" value="AT2G42200"/>
</dbReference>
<dbReference type="KEGG" id="ath:AT2G42200"/>
<dbReference type="Araport" id="AT2G42200"/>
<dbReference type="TAIR" id="AT2G42200">
    <property type="gene designation" value="SPL9"/>
</dbReference>
<dbReference type="eggNOG" id="ENOG502QPVZ">
    <property type="taxonomic scope" value="Eukaryota"/>
</dbReference>
<dbReference type="HOGENOM" id="CLU_057950_1_0_1"/>
<dbReference type="InParanoid" id="Q700W2"/>
<dbReference type="OMA" id="TEPDNCQ"/>
<dbReference type="PhylomeDB" id="Q700W2"/>
<dbReference type="PRO" id="PR:Q700W2"/>
<dbReference type="Proteomes" id="UP000006548">
    <property type="component" value="Chromosome 2"/>
</dbReference>
<dbReference type="ExpressionAtlas" id="Q700W2">
    <property type="expression patterns" value="baseline and differential"/>
</dbReference>
<dbReference type="GO" id="GO:0005737">
    <property type="term" value="C:cytoplasm"/>
    <property type="evidence" value="ECO:0007669"/>
    <property type="project" value="UniProtKB-SubCell"/>
</dbReference>
<dbReference type="GO" id="GO:0005634">
    <property type="term" value="C:nucleus"/>
    <property type="evidence" value="ECO:0007669"/>
    <property type="project" value="UniProtKB-SubCell"/>
</dbReference>
<dbReference type="GO" id="GO:0003677">
    <property type="term" value="F:DNA binding"/>
    <property type="evidence" value="ECO:0007669"/>
    <property type="project" value="UniProtKB-KW"/>
</dbReference>
<dbReference type="GO" id="GO:0003700">
    <property type="term" value="F:DNA-binding transcription factor activity"/>
    <property type="evidence" value="ECO:0000250"/>
    <property type="project" value="TAIR"/>
</dbReference>
<dbReference type="GO" id="GO:0008270">
    <property type="term" value="F:zinc ion binding"/>
    <property type="evidence" value="ECO:0007669"/>
    <property type="project" value="UniProtKB-KW"/>
</dbReference>
<dbReference type="GO" id="GO:0048653">
    <property type="term" value="P:anther development"/>
    <property type="evidence" value="ECO:0000316"/>
    <property type="project" value="TAIR"/>
</dbReference>
<dbReference type="GO" id="GO:0048366">
    <property type="term" value="P:leaf development"/>
    <property type="evidence" value="ECO:0000314"/>
    <property type="project" value="TAIR"/>
</dbReference>
<dbReference type="GO" id="GO:0006355">
    <property type="term" value="P:regulation of DNA-templated transcription"/>
    <property type="evidence" value="ECO:0000304"/>
    <property type="project" value="TAIR"/>
</dbReference>
<dbReference type="GO" id="GO:2000025">
    <property type="term" value="P:regulation of leaf formation"/>
    <property type="evidence" value="ECO:0000315"/>
    <property type="project" value="TAIR"/>
</dbReference>
<dbReference type="FunFam" id="4.10.1100.10:FF:000001">
    <property type="entry name" value="Squamosa promoter-binding-like protein 14"/>
    <property type="match status" value="1"/>
</dbReference>
<dbReference type="Gene3D" id="4.10.1100.10">
    <property type="entry name" value="Transcription factor, SBP-box domain"/>
    <property type="match status" value="1"/>
</dbReference>
<dbReference type="InterPro" id="IPR044817">
    <property type="entry name" value="SBP-like"/>
</dbReference>
<dbReference type="InterPro" id="IPR004333">
    <property type="entry name" value="SBP_dom"/>
</dbReference>
<dbReference type="InterPro" id="IPR036893">
    <property type="entry name" value="SBP_sf"/>
</dbReference>
<dbReference type="PANTHER" id="PTHR31251">
    <property type="entry name" value="SQUAMOSA PROMOTER-BINDING-LIKE PROTEIN 4"/>
    <property type="match status" value="1"/>
</dbReference>
<dbReference type="PANTHER" id="PTHR31251:SF140">
    <property type="entry name" value="SQUAMOSA PROMOTER-BINDING-LIKE PROTEIN 9"/>
    <property type="match status" value="1"/>
</dbReference>
<dbReference type="Pfam" id="PF03110">
    <property type="entry name" value="SBP"/>
    <property type="match status" value="1"/>
</dbReference>
<dbReference type="SUPFAM" id="SSF103612">
    <property type="entry name" value="SBT domain"/>
    <property type="match status" value="1"/>
</dbReference>
<dbReference type="PROSITE" id="PS51141">
    <property type="entry name" value="ZF_SBP"/>
    <property type="match status" value="1"/>
</dbReference>
<evidence type="ECO:0000250" key="1"/>
<evidence type="ECO:0000255" key="2"/>
<evidence type="ECO:0000255" key="3">
    <source>
        <dbReference type="PROSITE-ProRule" id="PRU00470"/>
    </source>
</evidence>
<evidence type="ECO:0000256" key="4">
    <source>
        <dbReference type="SAM" id="MobiDB-lite"/>
    </source>
</evidence>
<evidence type="ECO:0000269" key="5">
    <source>
    </source>
</evidence>
<evidence type="ECO:0000269" key="6">
    <source>
    </source>
</evidence>
<evidence type="ECO:0000269" key="7">
    <source>
    </source>
</evidence>
<evidence type="ECO:0000303" key="8">
    <source>
    </source>
</evidence>
<evidence type="ECO:0000305" key="9"/>
<evidence type="ECO:0000305" key="10">
    <source>
    </source>
</evidence>
<sequence length="375" mass="40847">MEMGSNSGPGHGPGQAESGGSSTESSSFSGGLMFGQKIYFEDGGGGSGSSSSGGRSNRRVRGGGSGQSGQIPRCQVEGCGMDLTNAKGYYSRHRVCGVHSKTPKVTVAGIEQRFCQQCSRFHQLPEFDLEKRSCRRRLAGHNERRRKPQPASLSVLASRYGRIAPSLYENGDAGMNGSFLGNQEIGWPSSRTLDTRVMRRPVSSPSWQINPMNVFSQGSVGGGGTSFSSPEIMDTKLESYKGIGDSNCALSLLSNPHQPHDNNNNNNNNNNNNNNTWRASSGFGPMTVTMAQPPPAPSQHQYLNPPWVFKDNDNDMSPVLNLGRYTEPDNCQISSGTAMGEFELSDHHHQSRRQYMEDENTRAYDSSSHHTNWSL</sequence>
<comment type="function">
    <text evidence="1">Trans-acting factor that binds specifically to the consensus nucleotide sequence 5'-TNCGTACAA-3'.</text>
</comment>
<comment type="cofactor">
    <cofactor evidence="1">
        <name>Zn(2+)</name>
        <dbReference type="ChEBI" id="CHEBI:29105"/>
    </cofactor>
    <text evidence="1">Binds 2 Zn(2+) ions per subunit.</text>
</comment>
<comment type="subcellular location">
    <subcellularLocation>
        <location evidence="7">Nucleus</location>
    </subcellularLocation>
    <subcellularLocation>
        <location evidence="7">Cytoplasm</location>
    </subcellularLocation>
    <text>Mostly located in nucleus.</text>
</comment>
<comment type="alternative products">
    <event type="alternative splicing"/>
    <isoform>
        <id>Q700W2-1</id>
        <name>1</name>
        <sequence type="displayed"/>
    </isoform>
    <isoform>
        <id>Q700W2-2</id>
        <name>2</name>
        <sequence type="described" ref="VSP_013985"/>
    </isoform>
</comment>
<comment type="developmental stage">
    <text evidence="5 6">Expressed constitutively during plant development, with a strong increase during flower development.</text>
</comment>
<comment type="induction">
    <text evidence="10">Negatively regulated by microRNAs miR156 and miR157.</text>
</comment>
<comment type="domain">
    <text>The SBP-type zinc finger is required for the binding to DNA.</text>
</comment>
<name>SPL9_ARATH</name>
<keyword id="KW-0025">Alternative splicing</keyword>
<keyword id="KW-0963">Cytoplasm</keyword>
<keyword id="KW-0238">DNA-binding</keyword>
<keyword id="KW-0479">Metal-binding</keyword>
<keyword id="KW-0539">Nucleus</keyword>
<keyword id="KW-1185">Reference proteome</keyword>
<keyword id="KW-0804">Transcription</keyword>
<keyword id="KW-0805">Transcription regulation</keyword>
<keyword id="KW-0862">Zinc</keyword>
<keyword id="KW-0863">Zinc-finger</keyword>
<protein>
    <recommendedName>
        <fullName>Squamosa promoter-binding-like protein 9</fullName>
    </recommendedName>
</protein>
<gene>
    <name type="primary">SPL9</name>
    <name type="ordered locus">At2g42200</name>
    <name type="ORF">T24P15.11</name>
</gene>
<proteinExistence type="evidence at transcript level"/>